<organism>
    <name type="scientific">Mus musculus</name>
    <name type="common">Mouse</name>
    <dbReference type="NCBI Taxonomy" id="10090"/>
    <lineage>
        <taxon>Eukaryota</taxon>
        <taxon>Metazoa</taxon>
        <taxon>Chordata</taxon>
        <taxon>Craniata</taxon>
        <taxon>Vertebrata</taxon>
        <taxon>Euteleostomi</taxon>
        <taxon>Mammalia</taxon>
        <taxon>Eutheria</taxon>
        <taxon>Euarchontoglires</taxon>
        <taxon>Glires</taxon>
        <taxon>Rodentia</taxon>
        <taxon>Myomorpha</taxon>
        <taxon>Muroidea</taxon>
        <taxon>Muridae</taxon>
        <taxon>Murinae</taxon>
        <taxon>Mus</taxon>
        <taxon>Mus</taxon>
    </lineage>
</organism>
<accession>Q8K129</accession>
<comment type="function">
    <text evidence="1">May mediate extracellular or intracellular signaling of cortical neurons during forebrain development.</text>
</comment>
<comment type="subcellular location">
    <subcellularLocation>
        <location evidence="4">Membrane</location>
        <topology evidence="4">Single-pass membrane protein</topology>
    </subcellularLocation>
</comment>
<comment type="similarity">
    <text evidence="4">Belongs to the cortexin family.</text>
</comment>
<keyword id="KW-0472">Membrane</keyword>
<keyword id="KW-1185">Reference proteome</keyword>
<keyword id="KW-0812">Transmembrane</keyword>
<keyword id="KW-1133">Transmembrane helix</keyword>
<reference key="1">
    <citation type="journal article" date="2004" name="Genome Res.">
        <title>The status, quality, and expansion of the NIH full-length cDNA project: the Mammalian Gene Collection (MGC).</title>
        <authorList>
            <consortium name="The MGC Project Team"/>
        </authorList>
    </citation>
    <scope>NUCLEOTIDE SEQUENCE [LARGE SCALE MRNA]</scope>
    <source>
        <tissue>Colon</tissue>
    </source>
</reference>
<evidence type="ECO:0000250" key="1"/>
<evidence type="ECO:0000255" key="2"/>
<evidence type="ECO:0000256" key="3">
    <source>
        <dbReference type="SAM" id="MobiDB-lite"/>
    </source>
</evidence>
<evidence type="ECO:0000305" key="4"/>
<proteinExistence type="inferred from homology"/>
<name>CTXN1_MOUSE</name>
<dbReference type="EMBL" id="BC028881">
    <property type="protein sequence ID" value="AAH28881.1"/>
    <property type="molecule type" value="mRNA"/>
</dbReference>
<dbReference type="CCDS" id="CCDS40211.1"/>
<dbReference type="RefSeq" id="NP_899138.1">
    <property type="nucleotide sequence ID" value="NM_183315.2"/>
</dbReference>
<dbReference type="SMR" id="Q8K129"/>
<dbReference type="FunCoup" id="Q8K129">
    <property type="interactions" value="8"/>
</dbReference>
<dbReference type="IntAct" id="Q8K129">
    <property type="interactions" value="1"/>
</dbReference>
<dbReference type="STRING" id="10090.ENSMUSP00000057115"/>
<dbReference type="iPTMnet" id="Q8K129"/>
<dbReference type="PhosphoSitePlus" id="Q8K129"/>
<dbReference type="PaxDb" id="10090-ENSMUSP00000057115"/>
<dbReference type="ProteomicsDB" id="284060"/>
<dbReference type="Antibodypedia" id="2649">
    <property type="antibodies" value="21 antibodies from 7 providers"/>
</dbReference>
<dbReference type="DNASU" id="330695"/>
<dbReference type="Ensembl" id="ENSMUST00000053252.9">
    <property type="protein sequence ID" value="ENSMUSP00000057115.8"/>
    <property type="gene ID" value="ENSMUSG00000048644.9"/>
</dbReference>
<dbReference type="GeneID" id="330695"/>
<dbReference type="KEGG" id="mmu:330695"/>
<dbReference type="UCSC" id="uc009ktp.2">
    <property type="organism name" value="mouse"/>
</dbReference>
<dbReference type="AGR" id="MGI:88566"/>
<dbReference type="CTD" id="404217"/>
<dbReference type="MGI" id="MGI:88566">
    <property type="gene designation" value="Ctxn1"/>
</dbReference>
<dbReference type="VEuPathDB" id="HostDB:ENSMUSG00000048644"/>
<dbReference type="eggNOG" id="ENOG502S3S8">
    <property type="taxonomic scope" value="Eukaryota"/>
</dbReference>
<dbReference type="GeneTree" id="ENSGT00940000154412"/>
<dbReference type="HOGENOM" id="CLU_193122_0_0_1"/>
<dbReference type="InParanoid" id="Q8K129"/>
<dbReference type="OMA" id="AWTPDYE"/>
<dbReference type="PhylomeDB" id="Q8K129"/>
<dbReference type="TreeFam" id="TF333403"/>
<dbReference type="BioGRID-ORCS" id="330695">
    <property type="hits" value="2 hits in 79 CRISPR screens"/>
</dbReference>
<dbReference type="ChiTaRS" id="Ctxn1">
    <property type="organism name" value="mouse"/>
</dbReference>
<dbReference type="PRO" id="PR:Q8K129"/>
<dbReference type="Proteomes" id="UP000000589">
    <property type="component" value="Chromosome 8"/>
</dbReference>
<dbReference type="RNAct" id="Q8K129">
    <property type="molecule type" value="protein"/>
</dbReference>
<dbReference type="Bgee" id="ENSMUSG00000048644">
    <property type="expression patterns" value="Expressed in piriform cortex and 209 other cell types or tissues"/>
</dbReference>
<dbReference type="ExpressionAtlas" id="Q8K129">
    <property type="expression patterns" value="baseline and differential"/>
</dbReference>
<dbReference type="GO" id="GO:0016020">
    <property type="term" value="C:membrane"/>
    <property type="evidence" value="ECO:0007669"/>
    <property type="project" value="UniProtKB-SubCell"/>
</dbReference>
<dbReference type="InterPro" id="IPR020066">
    <property type="entry name" value="Cortexin"/>
</dbReference>
<dbReference type="PANTHER" id="PTHR16736:SF3">
    <property type="entry name" value="CORTEXIN-1"/>
    <property type="match status" value="1"/>
</dbReference>
<dbReference type="PANTHER" id="PTHR16736">
    <property type="entry name" value="CORTEXIN-1-RELATED"/>
    <property type="match status" value="1"/>
</dbReference>
<dbReference type="Pfam" id="PF11057">
    <property type="entry name" value="Cortexin"/>
    <property type="match status" value="1"/>
</dbReference>
<feature type="chain" id="PRO_0000079501" description="Cortexin-1">
    <location>
        <begin position="1"/>
        <end position="82"/>
    </location>
</feature>
<feature type="transmembrane region" description="Helical" evidence="2">
    <location>
        <begin position="30"/>
        <end position="50"/>
    </location>
</feature>
<feature type="region of interest" description="Disordered" evidence="3">
    <location>
        <begin position="1"/>
        <end position="20"/>
    </location>
</feature>
<protein>
    <recommendedName>
        <fullName>Cortexin-1</fullName>
    </recommendedName>
</protein>
<sequence>MSSAWTLSPEPLPPSTGPPVGAGLDVEQRTVFAFVLCLLVVLVLLMVRCVRILLDPYSRMPASSWTDHKEALERGQFDYALV</sequence>
<gene>
    <name type="primary">Ctxn1</name>
    <name type="synonym">Ctxn</name>
</gene>